<accession>P64359</accession>
<accession>Q99QW7</accession>
<feature type="chain" id="PRO_0000142053" description="1-(5-phosphoribosyl)-5-[(5-phosphoribosylamino)methylideneamino] imidazole-4-carboxamide isomerase">
    <location>
        <begin position="1"/>
        <end position="234"/>
    </location>
</feature>
<feature type="active site" description="Proton acceptor" evidence="1">
    <location>
        <position position="9"/>
    </location>
</feature>
<feature type="active site" description="Proton donor" evidence="1">
    <location>
        <position position="131"/>
    </location>
</feature>
<protein>
    <recommendedName>
        <fullName>1-(5-phosphoribosyl)-5-[(5-phosphoribosylamino)methylideneamino] imidazole-4-carboxamide isomerase</fullName>
        <ecNumber>5.3.1.16</ecNumber>
    </recommendedName>
    <alternativeName>
        <fullName>Phosphoribosylformimino-5-aminoimidazole carboxamide ribotide isomerase</fullName>
    </alternativeName>
</protein>
<proteinExistence type="inferred from homology"/>
<name>HIS4_STAAM</name>
<reference key="1">
    <citation type="journal article" date="2001" name="Lancet">
        <title>Whole genome sequencing of meticillin-resistant Staphylococcus aureus.</title>
        <authorList>
            <person name="Kuroda M."/>
            <person name="Ohta T."/>
            <person name="Uchiyama I."/>
            <person name="Baba T."/>
            <person name="Yuzawa H."/>
            <person name="Kobayashi I."/>
            <person name="Cui L."/>
            <person name="Oguchi A."/>
            <person name="Aoki K."/>
            <person name="Nagai Y."/>
            <person name="Lian J.-Q."/>
            <person name="Ito T."/>
            <person name="Kanamori M."/>
            <person name="Matsumaru H."/>
            <person name="Maruyama A."/>
            <person name="Murakami H."/>
            <person name="Hosoyama A."/>
            <person name="Mizutani-Ui Y."/>
            <person name="Takahashi N.K."/>
            <person name="Sawano T."/>
            <person name="Inoue R."/>
            <person name="Kaito C."/>
            <person name="Sekimizu K."/>
            <person name="Hirakawa H."/>
            <person name="Kuhara S."/>
            <person name="Goto S."/>
            <person name="Yabuzaki J."/>
            <person name="Kanehisa M."/>
            <person name="Yamashita A."/>
            <person name="Oshima K."/>
            <person name="Furuya K."/>
            <person name="Yoshino C."/>
            <person name="Shiba T."/>
            <person name="Hattori M."/>
            <person name="Ogasawara N."/>
            <person name="Hayashi H."/>
            <person name="Hiramatsu K."/>
        </authorList>
    </citation>
    <scope>NUCLEOTIDE SEQUENCE [LARGE SCALE GENOMIC DNA]</scope>
    <source>
        <strain>Mu50 / ATCC 700699</strain>
    </source>
</reference>
<gene>
    <name type="primary">hisA</name>
    <name type="ordered locus">SAV2674</name>
</gene>
<evidence type="ECO:0000250" key="1"/>
<evidence type="ECO:0000305" key="2"/>
<organism>
    <name type="scientific">Staphylococcus aureus (strain Mu50 / ATCC 700699)</name>
    <dbReference type="NCBI Taxonomy" id="158878"/>
    <lineage>
        <taxon>Bacteria</taxon>
        <taxon>Bacillati</taxon>
        <taxon>Bacillota</taxon>
        <taxon>Bacilli</taxon>
        <taxon>Bacillales</taxon>
        <taxon>Staphylococcaceae</taxon>
        <taxon>Staphylococcus</taxon>
    </lineage>
</organism>
<keyword id="KW-0028">Amino-acid biosynthesis</keyword>
<keyword id="KW-0963">Cytoplasm</keyword>
<keyword id="KW-0368">Histidine biosynthesis</keyword>
<keyword id="KW-0413">Isomerase</keyword>
<sequence>MIELWPAIDLIGSTSVRLTEGKYDSEEKMSRSAEESIAYYSQFECVNRIHIVDLIGAKAQYAREFDYIKSLRRLTTKDIEVGGGIRTKSQIMDYFAAGINYCIVGTKGIQDTDWLKEMAHTFPGRIYLSVDAYGEDIKVNGWEEDTELNLFSFVRQLSDIPLGGIIYTDIAKDGKMSGPNFELTGQLVKATTIPVIASGGIRHQQDIQRLASLNVHAAIIGKAAHQASFWEGLE</sequence>
<comment type="catalytic activity">
    <reaction>
        <text>1-(5-phospho-beta-D-ribosyl)-5-[(5-phospho-beta-D-ribosylamino)methylideneamino]imidazole-4-carboxamide = 5-[(5-phospho-1-deoxy-D-ribulos-1-ylimino)methylamino]-1-(5-phospho-beta-D-ribosyl)imidazole-4-carboxamide</text>
        <dbReference type="Rhea" id="RHEA:15469"/>
        <dbReference type="ChEBI" id="CHEBI:58435"/>
        <dbReference type="ChEBI" id="CHEBI:58525"/>
        <dbReference type="EC" id="5.3.1.16"/>
    </reaction>
</comment>
<comment type="pathway">
    <text>Amino-acid biosynthesis; L-histidine biosynthesis; L-histidine from 5-phospho-alpha-D-ribose 1-diphosphate: step 4/9.</text>
</comment>
<comment type="subcellular location">
    <subcellularLocation>
        <location evidence="1">Cytoplasm</location>
    </subcellularLocation>
</comment>
<comment type="similarity">
    <text evidence="2">Belongs to the HisA/HisF family.</text>
</comment>
<dbReference type="EC" id="5.3.1.16"/>
<dbReference type="EMBL" id="BA000017">
    <property type="protein sequence ID" value="BAB58836.1"/>
    <property type="molecule type" value="Genomic_DNA"/>
</dbReference>
<dbReference type="RefSeq" id="WP_000571742.1">
    <property type="nucleotide sequence ID" value="NC_002758.2"/>
</dbReference>
<dbReference type="SMR" id="P64359"/>
<dbReference type="DNASU" id="1122699"/>
<dbReference type="KEGG" id="sav:SAV2674"/>
<dbReference type="HOGENOM" id="CLU_048577_1_2_9"/>
<dbReference type="PhylomeDB" id="P64359"/>
<dbReference type="UniPathway" id="UPA00031">
    <property type="reaction ID" value="UER00009"/>
</dbReference>
<dbReference type="Proteomes" id="UP000002481">
    <property type="component" value="Chromosome"/>
</dbReference>
<dbReference type="GO" id="GO:0005737">
    <property type="term" value="C:cytoplasm"/>
    <property type="evidence" value="ECO:0007669"/>
    <property type="project" value="UniProtKB-SubCell"/>
</dbReference>
<dbReference type="GO" id="GO:0003949">
    <property type="term" value="F:1-(5-phosphoribosyl)-5-[(5-phosphoribosylamino)methylideneamino]imidazole-4-carboxamide isomerase activity"/>
    <property type="evidence" value="ECO:0007669"/>
    <property type="project" value="UniProtKB-UniRule"/>
</dbReference>
<dbReference type="GO" id="GO:0000105">
    <property type="term" value="P:L-histidine biosynthetic process"/>
    <property type="evidence" value="ECO:0007669"/>
    <property type="project" value="UniProtKB-UniRule"/>
</dbReference>
<dbReference type="GO" id="GO:0000162">
    <property type="term" value="P:L-tryptophan biosynthetic process"/>
    <property type="evidence" value="ECO:0007669"/>
    <property type="project" value="TreeGrafter"/>
</dbReference>
<dbReference type="CDD" id="cd04732">
    <property type="entry name" value="HisA"/>
    <property type="match status" value="1"/>
</dbReference>
<dbReference type="FunFam" id="3.20.20.70:FF:000213">
    <property type="entry name" value="1-(5-phosphoribosyl)-5-[(5-phosphoribosylamino)methylideneamino] imidazole-4-carboxamide isomerase"/>
    <property type="match status" value="1"/>
</dbReference>
<dbReference type="Gene3D" id="3.20.20.70">
    <property type="entry name" value="Aldolase class I"/>
    <property type="match status" value="1"/>
</dbReference>
<dbReference type="HAMAP" id="MF_01014">
    <property type="entry name" value="HisA"/>
    <property type="match status" value="1"/>
</dbReference>
<dbReference type="InterPro" id="IPR013785">
    <property type="entry name" value="Aldolase_TIM"/>
</dbReference>
<dbReference type="InterPro" id="IPR006062">
    <property type="entry name" value="His_biosynth"/>
</dbReference>
<dbReference type="InterPro" id="IPR006063">
    <property type="entry name" value="HisA_bact_arch"/>
</dbReference>
<dbReference type="InterPro" id="IPR044524">
    <property type="entry name" value="Isoase_HisA-like"/>
</dbReference>
<dbReference type="InterPro" id="IPR023016">
    <property type="entry name" value="Isoase_HisA-like_bact"/>
</dbReference>
<dbReference type="InterPro" id="IPR011060">
    <property type="entry name" value="RibuloseP-bd_barrel"/>
</dbReference>
<dbReference type="NCBIfam" id="TIGR00007">
    <property type="entry name" value="1-(5-phosphoribosyl)-5-[(5-phosphoribosylamino)methylideneamino]imidazole-4-carboxamide isomerase"/>
    <property type="match status" value="1"/>
</dbReference>
<dbReference type="NCBIfam" id="NF010114">
    <property type="entry name" value="PRK13587.1"/>
    <property type="match status" value="1"/>
</dbReference>
<dbReference type="PANTHER" id="PTHR43090">
    <property type="entry name" value="1-(5-PHOSPHORIBOSYL)-5-[(5-PHOSPHORIBOSYLAMINO)METHYLIDENEAMINO] IMIDAZOLE-4-CARBOXAMIDE ISOMERASE"/>
    <property type="match status" value="1"/>
</dbReference>
<dbReference type="PANTHER" id="PTHR43090:SF2">
    <property type="entry name" value="1-(5-PHOSPHORIBOSYL)-5-[(5-PHOSPHORIBOSYLAMINO)METHYLIDENEAMINO] IMIDAZOLE-4-CARBOXAMIDE ISOMERASE"/>
    <property type="match status" value="1"/>
</dbReference>
<dbReference type="Pfam" id="PF00977">
    <property type="entry name" value="His_biosynth"/>
    <property type="match status" value="1"/>
</dbReference>
<dbReference type="SUPFAM" id="SSF51366">
    <property type="entry name" value="Ribulose-phoshate binding barrel"/>
    <property type="match status" value="1"/>
</dbReference>